<dbReference type="EC" id="3.5.1.96" evidence="1"/>
<dbReference type="EMBL" id="AF011922">
    <property type="protein sequence ID" value="AAC46014.1"/>
    <property type="molecule type" value="Genomic_DNA"/>
</dbReference>
<dbReference type="EMBL" id="AE004091">
    <property type="protein sequence ID" value="AAG04290.1"/>
    <property type="molecule type" value="Genomic_DNA"/>
</dbReference>
<dbReference type="PIR" id="F83533">
    <property type="entry name" value="F83533"/>
</dbReference>
<dbReference type="RefSeq" id="NP_249592.1">
    <property type="nucleotide sequence ID" value="NC_002516.2"/>
</dbReference>
<dbReference type="RefSeq" id="WP_003112605.1">
    <property type="nucleotide sequence ID" value="NZ_QZGE01000007.1"/>
</dbReference>
<dbReference type="SMR" id="O50177"/>
<dbReference type="FunCoup" id="O50177">
    <property type="interactions" value="41"/>
</dbReference>
<dbReference type="STRING" id="208964.PA0901"/>
<dbReference type="PaxDb" id="208964-PA0901"/>
<dbReference type="GeneID" id="878165"/>
<dbReference type="KEGG" id="pae:PA0901"/>
<dbReference type="PATRIC" id="fig|208964.12.peg.936"/>
<dbReference type="PseudoCAP" id="PA0901"/>
<dbReference type="HOGENOM" id="CLU_071608_0_0_6"/>
<dbReference type="InParanoid" id="O50177"/>
<dbReference type="OrthoDB" id="5290473at2"/>
<dbReference type="PhylomeDB" id="O50177"/>
<dbReference type="BioCyc" id="PAER208964:G1FZ6-917-MONOMER"/>
<dbReference type="BRENDA" id="3.5.1.96">
    <property type="organism ID" value="5087"/>
</dbReference>
<dbReference type="UniPathway" id="UPA00185">
    <property type="reaction ID" value="UER00283"/>
</dbReference>
<dbReference type="Proteomes" id="UP000002438">
    <property type="component" value="Chromosome"/>
</dbReference>
<dbReference type="GO" id="GO:0016811">
    <property type="term" value="F:hydrolase activity, acting on carbon-nitrogen (but not peptide) bonds, in linear amides"/>
    <property type="evidence" value="ECO:0000318"/>
    <property type="project" value="GO_Central"/>
</dbReference>
<dbReference type="GO" id="GO:0016788">
    <property type="term" value="F:hydrolase activity, acting on ester bonds"/>
    <property type="evidence" value="ECO:0007669"/>
    <property type="project" value="UniProtKB-UniRule"/>
</dbReference>
<dbReference type="GO" id="GO:0009017">
    <property type="term" value="F:succinylglutamate desuccinylase activity"/>
    <property type="evidence" value="ECO:0007669"/>
    <property type="project" value="UniProtKB-EC"/>
</dbReference>
<dbReference type="GO" id="GO:0008270">
    <property type="term" value="F:zinc ion binding"/>
    <property type="evidence" value="ECO:0007669"/>
    <property type="project" value="UniProtKB-UniRule"/>
</dbReference>
<dbReference type="GO" id="GO:0006527">
    <property type="term" value="P:arginine catabolic process"/>
    <property type="evidence" value="ECO:0000314"/>
    <property type="project" value="PseudoCAP"/>
</dbReference>
<dbReference type="GO" id="GO:0019544">
    <property type="term" value="P:arginine catabolic process to glutamate"/>
    <property type="evidence" value="ECO:0007669"/>
    <property type="project" value="UniProtKB-UniRule"/>
</dbReference>
<dbReference type="GO" id="GO:0019545">
    <property type="term" value="P:arginine catabolic process to succinate"/>
    <property type="evidence" value="ECO:0007669"/>
    <property type="project" value="UniProtKB-UniRule"/>
</dbReference>
<dbReference type="CDD" id="cd03855">
    <property type="entry name" value="M14_ASTE"/>
    <property type="match status" value="1"/>
</dbReference>
<dbReference type="FunFam" id="3.40.630.10:FF:000017">
    <property type="entry name" value="Succinylglutamate desuccinylase"/>
    <property type="match status" value="1"/>
</dbReference>
<dbReference type="Gene3D" id="3.40.630.10">
    <property type="entry name" value="Zn peptidases"/>
    <property type="match status" value="1"/>
</dbReference>
<dbReference type="HAMAP" id="MF_00767">
    <property type="entry name" value="Arg_catab_AstE"/>
    <property type="match status" value="1"/>
</dbReference>
<dbReference type="InterPro" id="IPR050178">
    <property type="entry name" value="AspA/AstE_fam"/>
</dbReference>
<dbReference type="InterPro" id="IPR055438">
    <property type="entry name" value="AstE_AspA_cat"/>
</dbReference>
<dbReference type="InterPro" id="IPR007036">
    <property type="entry name" value="Aste_AspA_hybrid_dom"/>
</dbReference>
<dbReference type="InterPro" id="IPR016681">
    <property type="entry name" value="SuccinylGlu_desuccinylase"/>
</dbReference>
<dbReference type="NCBIfam" id="TIGR03242">
    <property type="entry name" value="arg_catab_astE"/>
    <property type="match status" value="1"/>
</dbReference>
<dbReference type="NCBIfam" id="NF003706">
    <property type="entry name" value="PRK05324.1"/>
    <property type="match status" value="1"/>
</dbReference>
<dbReference type="PANTHER" id="PTHR15162">
    <property type="entry name" value="ASPARTOACYLASE"/>
    <property type="match status" value="1"/>
</dbReference>
<dbReference type="PANTHER" id="PTHR15162:SF7">
    <property type="entry name" value="SUCCINYLGLUTAMATE DESUCCINYLASE"/>
    <property type="match status" value="1"/>
</dbReference>
<dbReference type="Pfam" id="PF24827">
    <property type="entry name" value="AstE_AspA_cat"/>
    <property type="match status" value="1"/>
</dbReference>
<dbReference type="Pfam" id="PF04952">
    <property type="entry name" value="AstE_AspA_hybrid"/>
    <property type="match status" value="1"/>
</dbReference>
<dbReference type="PIRSF" id="PIRSF017020">
    <property type="entry name" value="AstE"/>
    <property type="match status" value="1"/>
</dbReference>
<dbReference type="SUPFAM" id="SSF53187">
    <property type="entry name" value="Zn-dependent exopeptidases"/>
    <property type="match status" value="1"/>
</dbReference>
<keyword id="KW-0056">Arginine metabolism</keyword>
<keyword id="KW-0378">Hydrolase</keyword>
<keyword id="KW-0479">Metal-binding</keyword>
<keyword id="KW-1185">Reference proteome</keyword>
<keyword id="KW-0862">Zinc</keyword>
<feature type="chain" id="PRO_0000174643" description="Succinylglutamate desuccinylase">
    <location>
        <begin position="1"/>
        <end position="332"/>
    </location>
</feature>
<feature type="active site" evidence="1">
    <location>
        <position position="215"/>
    </location>
</feature>
<feature type="binding site" evidence="1">
    <location>
        <position position="59"/>
    </location>
    <ligand>
        <name>Zn(2+)</name>
        <dbReference type="ChEBI" id="CHEBI:29105"/>
    </ligand>
</feature>
<feature type="binding site" evidence="1">
    <location>
        <position position="62"/>
    </location>
    <ligand>
        <name>Zn(2+)</name>
        <dbReference type="ChEBI" id="CHEBI:29105"/>
    </ligand>
</feature>
<feature type="binding site" evidence="1">
    <location>
        <position position="151"/>
    </location>
    <ligand>
        <name>Zn(2+)</name>
        <dbReference type="ChEBI" id="CHEBI:29105"/>
    </ligand>
</feature>
<protein>
    <recommendedName>
        <fullName evidence="1">Succinylglutamate desuccinylase</fullName>
        <ecNumber evidence="1">3.5.1.96</ecNumber>
    </recommendedName>
</protein>
<evidence type="ECO:0000255" key="1">
    <source>
        <dbReference type="HAMAP-Rule" id="MF_00767"/>
    </source>
</evidence>
<accession>O50177</accession>
<gene>
    <name evidence="1" type="primary">astE</name>
    <name type="synonym">aruE</name>
    <name type="ordered locus">PA0901</name>
</gene>
<name>ASTE_PSEAE</name>
<reference key="1">
    <citation type="journal article" date="1997" name="J. Bacteriol.">
        <title>Cloning and characterization of the aru genes encoding enzymes of the catabolic arginine succinyltransferase pathway in Pseudomonas aeruginosa.</title>
        <authorList>
            <person name="Itoh Y."/>
        </authorList>
    </citation>
    <scope>NUCLEOTIDE SEQUENCE [GENOMIC DNA]</scope>
    <source>
        <strain>ATCC 15692 / DSM 22644 / CIP 104116 / JCM 14847 / LMG 12228 / 1C / PRS 101 / PAO1</strain>
    </source>
</reference>
<reference key="2">
    <citation type="journal article" date="2000" name="Nature">
        <title>Complete genome sequence of Pseudomonas aeruginosa PAO1, an opportunistic pathogen.</title>
        <authorList>
            <person name="Stover C.K."/>
            <person name="Pham X.-Q.T."/>
            <person name="Erwin A.L."/>
            <person name="Mizoguchi S.D."/>
            <person name="Warrener P."/>
            <person name="Hickey M.J."/>
            <person name="Brinkman F.S.L."/>
            <person name="Hufnagle W.O."/>
            <person name="Kowalik D.J."/>
            <person name="Lagrou M."/>
            <person name="Garber R.L."/>
            <person name="Goltry L."/>
            <person name="Tolentino E."/>
            <person name="Westbrock-Wadman S."/>
            <person name="Yuan Y."/>
            <person name="Brody L.L."/>
            <person name="Coulter S.N."/>
            <person name="Folger K.R."/>
            <person name="Kas A."/>
            <person name="Larbig K."/>
            <person name="Lim R.M."/>
            <person name="Smith K.A."/>
            <person name="Spencer D.H."/>
            <person name="Wong G.K.-S."/>
            <person name="Wu Z."/>
            <person name="Paulsen I.T."/>
            <person name="Reizer J."/>
            <person name="Saier M.H. Jr."/>
            <person name="Hancock R.E.W."/>
            <person name="Lory S."/>
            <person name="Olson M.V."/>
        </authorList>
    </citation>
    <scope>NUCLEOTIDE SEQUENCE [LARGE SCALE GENOMIC DNA]</scope>
    <source>
        <strain>ATCC 15692 / DSM 22644 / CIP 104116 / JCM 14847 / LMG 12228 / 1C / PRS 101 / PAO1</strain>
    </source>
</reference>
<proteinExistence type="inferred from homology"/>
<sequence>MLALGKLLDLTLAGREPTEKIQLTADGTRLHWLAEGALEVTPIGARDNGVDLLLSAGIHGNETAPIELLERLIRKVAAGTLKPAARVLFLFGNPEAIRRGERYVEQDMNRLFNGRHEEGSGNEAFRAAELERLAQVFFSKTERVHLHYDLHTAIRGSKIEQFALYPWAEGRQHSRSELARLRDAGIEAVLLQNKPGITFSAYTYGQLGAEAFTLELGKARPFGENQEVNLERLERSLELLIDGSEEQPDGSRLDGLKLFSVSREVIKHSDHFRLHLDDDVANFTELSPGYLLAEDIGGTRWVVDEVGARIIFPNPRVKNGLRAGILVVPAKL</sequence>
<comment type="function">
    <text evidence="1">Transforms N(2)-succinylglutamate into succinate and glutamate.</text>
</comment>
<comment type="catalytic activity">
    <reaction evidence="1">
        <text>N-succinyl-L-glutamate + H2O = L-glutamate + succinate</text>
        <dbReference type="Rhea" id="RHEA:15169"/>
        <dbReference type="ChEBI" id="CHEBI:15377"/>
        <dbReference type="ChEBI" id="CHEBI:29985"/>
        <dbReference type="ChEBI" id="CHEBI:30031"/>
        <dbReference type="ChEBI" id="CHEBI:58763"/>
        <dbReference type="EC" id="3.5.1.96"/>
    </reaction>
</comment>
<comment type="cofactor">
    <cofactor evidence="1">
        <name>Zn(2+)</name>
        <dbReference type="ChEBI" id="CHEBI:29105"/>
    </cofactor>
    <text evidence="1">Binds 1 zinc ion per subunit.</text>
</comment>
<comment type="pathway">
    <text evidence="1">Amino-acid degradation; L-arginine degradation via AST pathway; L-glutamate and succinate from L-arginine: step 5/5.</text>
</comment>
<comment type="similarity">
    <text evidence="1">Belongs to the AspA/AstE family. Succinylglutamate desuccinylase subfamily.</text>
</comment>
<organism>
    <name type="scientific">Pseudomonas aeruginosa (strain ATCC 15692 / DSM 22644 / CIP 104116 / JCM 14847 / LMG 12228 / 1C / PRS 101 / PAO1)</name>
    <dbReference type="NCBI Taxonomy" id="208964"/>
    <lineage>
        <taxon>Bacteria</taxon>
        <taxon>Pseudomonadati</taxon>
        <taxon>Pseudomonadota</taxon>
        <taxon>Gammaproteobacteria</taxon>
        <taxon>Pseudomonadales</taxon>
        <taxon>Pseudomonadaceae</taxon>
        <taxon>Pseudomonas</taxon>
    </lineage>
</organism>